<dbReference type="EMBL" id="CP000668">
    <property type="protein sequence ID" value="ABP39026.1"/>
    <property type="molecule type" value="Genomic_DNA"/>
</dbReference>
<dbReference type="SMR" id="A4TIB4"/>
<dbReference type="KEGG" id="ypp:YPDSF_0617"/>
<dbReference type="PATRIC" id="fig|386656.14.peg.1936"/>
<dbReference type="GO" id="GO:0005737">
    <property type="term" value="C:cytoplasm"/>
    <property type="evidence" value="ECO:0007669"/>
    <property type="project" value="UniProtKB-SubCell"/>
</dbReference>
<dbReference type="GO" id="GO:0005542">
    <property type="term" value="F:folic acid binding"/>
    <property type="evidence" value="ECO:0007669"/>
    <property type="project" value="UniProtKB-UniRule"/>
</dbReference>
<dbReference type="GO" id="GO:0016226">
    <property type="term" value="P:iron-sulfur cluster assembly"/>
    <property type="evidence" value="ECO:0007669"/>
    <property type="project" value="TreeGrafter"/>
</dbReference>
<dbReference type="GO" id="GO:0009451">
    <property type="term" value="P:RNA modification"/>
    <property type="evidence" value="ECO:0007669"/>
    <property type="project" value="InterPro"/>
</dbReference>
<dbReference type="GO" id="GO:0008033">
    <property type="term" value="P:tRNA processing"/>
    <property type="evidence" value="ECO:0007669"/>
    <property type="project" value="UniProtKB-UniRule"/>
</dbReference>
<dbReference type="FunFam" id="2.40.30.160:FF:000001">
    <property type="entry name" value="tRNA-modifying protein YgfZ"/>
    <property type="match status" value="1"/>
</dbReference>
<dbReference type="FunFam" id="3.30.70.1400:FF:000002">
    <property type="entry name" value="tRNA-modifying protein YgfZ"/>
    <property type="match status" value="1"/>
</dbReference>
<dbReference type="FunFam" id="3.30.70.1630:FF:000001">
    <property type="entry name" value="tRNA-modifying protein YgfZ"/>
    <property type="match status" value="1"/>
</dbReference>
<dbReference type="Gene3D" id="2.40.30.160">
    <property type="match status" value="1"/>
</dbReference>
<dbReference type="Gene3D" id="3.30.70.1630">
    <property type="match status" value="1"/>
</dbReference>
<dbReference type="Gene3D" id="3.30.70.1400">
    <property type="entry name" value="Aminomethyltransferase beta-barrel domains"/>
    <property type="match status" value="1"/>
</dbReference>
<dbReference type="HAMAP" id="MF_01175">
    <property type="entry name" value="tRNA_modifying_YgfZ"/>
    <property type="match status" value="1"/>
</dbReference>
<dbReference type="InterPro" id="IPR029043">
    <property type="entry name" value="GcvT/YgfZ_C"/>
</dbReference>
<dbReference type="InterPro" id="IPR023758">
    <property type="entry name" value="tRNA-modifying_YgfZ"/>
</dbReference>
<dbReference type="InterPro" id="IPR045179">
    <property type="entry name" value="YgfZ/GcvT"/>
</dbReference>
<dbReference type="InterPro" id="IPR017703">
    <property type="entry name" value="YgfZ/GcvT_CS"/>
</dbReference>
<dbReference type="InterPro" id="IPR048451">
    <property type="entry name" value="YgfZ_barrel"/>
</dbReference>
<dbReference type="NCBIfam" id="NF007110">
    <property type="entry name" value="PRK09559.1"/>
    <property type="match status" value="1"/>
</dbReference>
<dbReference type="NCBIfam" id="TIGR03317">
    <property type="entry name" value="ygfZ_signature"/>
    <property type="match status" value="1"/>
</dbReference>
<dbReference type="PANTHER" id="PTHR22602">
    <property type="entry name" value="TRANSFERASE CAF17, MITOCHONDRIAL-RELATED"/>
    <property type="match status" value="1"/>
</dbReference>
<dbReference type="PANTHER" id="PTHR22602:SF0">
    <property type="entry name" value="TRANSFERASE CAF17, MITOCHONDRIAL-RELATED"/>
    <property type="match status" value="1"/>
</dbReference>
<dbReference type="Pfam" id="PF21130">
    <property type="entry name" value="YgfZ_barrel"/>
    <property type="match status" value="1"/>
</dbReference>
<dbReference type="SUPFAM" id="SSF101790">
    <property type="entry name" value="Aminomethyltransferase beta-barrel domain"/>
    <property type="match status" value="1"/>
</dbReference>
<dbReference type="SUPFAM" id="SSF103025">
    <property type="entry name" value="Folate-binding domain"/>
    <property type="match status" value="1"/>
</dbReference>
<name>YGFZ_YERPP</name>
<protein>
    <recommendedName>
        <fullName evidence="1">tRNA-modifying protein YgfZ</fullName>
    </recommendedName>
</protein>
<comment type="function">
    <text evidence="1">Folate-binding protein involved in regulating the level of ATP-DnaA and in the modification of some tRNAs. It is probably a key factor in regulatory networks that act via tRNA modification, such as initiation of chromosomal replication.</text>
</comment>
<comment type="subcellular location">
    <subcellularLocation>
        <location evidence="1">Cytoplasm</location>
    </subcellularLocation>
</comment>
<comment type="similarity">
    <text evidence="1">Belongs to the tRNA-modifying YgfZ family.</text>
</comment>
<sequence length="330" mass="35966">MAYHTPFAAQPPVASSGLPLTLISLDDWALVTLTGADRVKYLQGQVTADIDALSADQHVLCAHCDAKGKMWSNLRLFYRGEGLAFIERRSLLDNQLSELKKYAVFSKVVIEPQPDAVLIGVAGSQAKTALAEIFTELPSAEHPVTQMGNSTLLHFSLPAERFLLVTDTEQAQQLVEKLAGRAQFNDSKQWLALDIEAGFPIIDAANSAQFIPQATNIQALNGISFTKGCYTGQEMVARAKYRGANKRALYWLAGNASRVPAAGEDLEWQLGENWRRTGTVLSAIQLNDGTVWVQAVLNNDLAADSVLRVRDDALGTLAIQPLPYSLAEDK</sequence>
<keyword id="KW-0963">Cytoplasm</keyword>
<keyword id="KW-0290">Folate-binding</keyword>
<keyword id="KW-0819">tRNA processing</keyword>
<reference key="1">
    <citation type="submission" date="2007-02" db="EMBL/GenBank/DDBJ databases">
        <title>Complete sequence of chromosome of Yersinia pestis Pestoides F.</title>
        <authorList>
            <consortium name="US DOE Joint Genome Institute"/>
            <person name="Copeland A."/>
            <person name="Lucas S."/>
            <person name="Lapidus A."/>
            <person name="Barry K."/>
            <person name="Detter J.C."/>
            <person name="Glavina del Rio T."/>
            <person name="Hammon N."/>
            <person name="Israni S."/>
            <person name="Dalin E."/>
            <person name="Tice H."/>
            <person name="Pitluck S."/>
            <person name="Di Bartolo G."/>
            <person name="Chain P."/>
            <person name="Malfatti S."/>
            <person name="Shin M."/>
            <person name="Vergez L."/>
            <person name="Schmutz J."/>
            <person name="Larimer F."/>
            <person name="Land M."/>
            <person name="Hauser L."/>
            <person name="Worsham P."/>
            <person name="Chu M."/>
            <person name="Bearden S."/>
            <person name="Garcia E."/>
            <person name="Richardson P."/>
        </authorList>
    </citation>
    <scope>NUCLEOTIDE SEQUENCE [LARGE SCALE GENOMIC DNA]</scope>
    <source>
        <strain>Pestoides F</strain>
    </source>
</reference>
<proteinExistence type="inferred from homology"/>
<accession>A4TIB4</accession>
<feature type="chain" id="PRO_1000065782" description="tRNA-modifying protein YgfZ">
    <location>
        <begin position="1"/>
        <end position="330"/>
    </location>
</feature>
<feature type="binding site" evidence="1">
    <location>
        <position position="28"/>
    </location>
    <ligand>
        <name>folate</name>
        <dbReference type="ChEBI" id="CHEBI:62501"/>
    </ligand>
</feature>
<feature type="binding site" evidence="1">
    <location>
        <position position="190"/>
    </location>
    <ligand>
        <name>folate</name>
        <dbReference type="ChEBI" id="CHEBI:62501"/>
    </ligand>
</feature>
<evidence type="ECO:0000255" key="1">
    <source>
        <dbReference type="HAMAP-Rule" id="MF_01175"/>
    </source>
</evidence>
<gene>
    <name type="ordered locus">YPDSF_0617</name>
</gene>
<organism>
    <name type="scientific">Yersinia pestis (strain Pestoides F)</name>
    <dbReference type="NCBI Taxonomy" id="386656"/>
    <lineage>
        <taxon>Bacteria</taxon>
        <taxon>Pseudomonadati</taxon>
        <taxon>Pseudomonadota</taxon>
        <taxon>Gammaproteobacteria</taxon>
        <taxon>Enterobacterales</taxon>
        <taxon>Yersiniaceae</taxon>
        <taxon>Yersinia</taxon>
    </lineage>
</organism>